<protein>
    <recommendedName>
        <fullName evidence="1">2-oxoisovalerate dehydrogenase subunit beta, mitochondrial</fullName>
        <ecNumber evidence="1">1.2.4.4</ecNumber>
    </recommendedName>
    <alternativeName>
        <fullName>Branched-chain alpha-keto acid dehydrogenase E1 component beta chain</fullName>
        <shortName>BCKDE1B</shortName>
        <shortName>BCKDH E1-beta</shortName>
    </alternativeName>
</protein>
<feature type="transit peptide" description="Mitochondrion" evidence="2">
    <location>
        <begin position="1"/>
        <end position="48"/>
    </location>
</feature>
<feature type="chain" id="PRO_0000312367" description="2-oxoisovalerate dehydrogenase subunit beta, mitochondrial">
    <location>
        <begin position="49"/>
        <end position="390"/>
    </location>
</feature>
<feature type="binding site" evidence="1">
    <location>
        <position position="150"/>
    </location>
    <ligand>
        <name>thiamine diphosphate</name>
        <dbReference type="ChEBI" id="CHEBI:58937"/>
        <note>ligand shared with alpha subunit</note>
    </ligand>
</feature>
<feature type="binding site" evidence="1">
    <location>
        <position position="176"/>
    </location>
    <ligand>
        <name>K(+)</name>
        <dbReference type="ChEBI" id="CHEBI:29103"/>
        <note>structural</note>
    </ligand>
</feature>
<feature type="binding site" evidence="1">
    <location>
        <position position="178"/>
    </location>
    <ligand>
        <name>K(+)</name>
        <dbReference type="ChEBI" id="CHEBI:29103"/>
        <note>structural</note>
    </ligand>
</feature>
<feature type="binding site" evidence="1">
    <location>
        <position position="179"/>
    </location>
    <ligand>
        <name>K(+)</name>
        <dbReference type="ChEBI" id="CHEBI:29103"/>
        <note>structural</note>
    </ligand>
</feature>
<feature type="binding site" evidence="1">
    <location>
        <position position="226"/>
    </location>
    <ligand>
        <name>K(+)</name>
        <dbReference type="ChEBI" id="CHEBI:29103"/>
        <note>structural</note>
    </ligand>
</feature>
<feature type="binding site" evidence="1">
    <location>
        <position position="229"/>
    </location>
    <ligand>
        <name>K(+)</name>
        <dbReference type="ChEBI" id="CHEBI:29103"/>
        <note>structural</note>
    </ligand>
</feature>
<feature type="binding site" evidence="1">
    <location>
        <position position="231"/>
    </location>
    <ligand>
        <name>K(+)</name>
        <dbReference type="ChEBI" id="CHEBI:29103"/>
        <note>structural</note>
    </ligand>
</feature>
<feature type="modified residue" description="N6-acetyllysine" evidence="5">
    <location>
        <position position="230"/>
    </location>
</feature>
<feature type="modified residue" description="N6-acetyllysine" evidence="5">
    <location>
        <position position="239"/>
    </location>
</feature>
<feature type="splice variant" id="VSP_029841" description="In isoform 2." evidence="3">
    <location>
        <begin position="1"/>
        <end position="68"/>
    </location>
</feature>
<accession>Q6P3A8</accession>
<gene>
    <name evidence="4" type="primary">Bckdhb</name>
</gene>
<name>ODBB_MOUSE</name>
<keyword id="KW-0007">Acetylation</keyword>
<keyword id="KW-0025">Alternative splicing</keyword>
<keyword id="KW-0443">Lipid metabolism</keyword>
<keyword id="KW-0479">Metal-binding</keyword>
<keyword id="KW-0496">Mitochondrion</keyword>
<keyword id="KW-0560">Oxidoreductase</keyword>
<keyword id="KW-0630">Potassium</keyword>
<keyword id="KW-1185">Reference proteome</keyword>
<keyword id="KW-0809">Transit peptide</keyword>
<proteinExistence type="evidence at protein level"/>
<reference key="1">
    <citation type="journal article" date="1993" name="Biochim. Biophys. Acta">
        <title>Molecular cloning and analysis of the expression of the E1 beta subunit of branched chain alpha-ketoacid dehydrogenase in mice.</title>
        <authorList>
            <person name="Chinsky J.M."/>
            <person name="Costeas P.A."/>
        </authorList>
    </citation>
    <scope>NUCLEOTIDE SEQUENCE [MRNA] (ISOFORM 1)</scope>
</reference>
<reference key="2">
    <citation type="journal article" date="2004" name="Genome Res.">
        <title>The status, quality, and expansion of the NIH full-length cDNA project: the Mammalian Gene Collection (MGC).</title>
        <authorList>
            <consortium name="The MGC Project Team"/>
        </authorList>
    </citation>
    <scope>NUCLEOTIDE SEQUENCE [LARGE SCALE MRNA] (ISOFORM 2)</scope>
    <source>
        <strain>C57BL/6J</strain>
        <tissue>Mammary gland</tissue>
    </source>
</reference>
<reference key="3">
    <citation type="journal article" date="2010" name="Cell">
        <title>A tissue-specific atlas of mouse protein phosphorylation and expression.</title>
        <authorList>
            <person name="Huttlin E.L."/>
            <person name="Jedrychowski M.P."/>
            <person name="Elias J.E."/>
            <person name="Goswami T."/>
            <person name="Rad R."/>
            <person name="Beausoleil S.A."/>
            <person name="Villen J."/>
            <person name="Haas W."/>
            <person name="Sowa M.E."/>
            <person name="Gygi S.P."/>
        </authorList>
    </citation>
    <scope>IDENTIFICATION BY MASS SPECTROMETRY [LARGE SCALE ANALYSIS]</scope>
    <source>
        <tissue>Brain</tissue>
        <tissue>Brown adipose tissue</tissue>
        <tissue>Heart</tissue>
        <tissue>Kidney</tissue>
        <tissue>Liver</tissue>
        <tissue>Lung</tissue>
        <tissue>Pancreas</tissue>
        <tissue>Spleen</tissue>
        <tissue>Testis</tissue>
    </source>
</reference>
<reference key="4">
    <citation type="journal article" date="2013" name="Proc. Natl. Acad. Sci. U.S.A.">
        <title>Label-free quantitative proteomics of the lysine acetylome in mitochondria identifies substrates of SIRT3 in metabolic pathways.</title>
        <authorList>
            <person name="Rardin M.J."/>
            <person name="Newman J.C."/>
            <person name="Held J.M."/>
            <person name="Cusack M.P."/>
            <person name="Sorensen D.J."/>
            <person name="Li B."/>
            <person name="Schilling B."/>
            <person name="Mooney S.D."/>
            <person name="Kahn C.R."/>
            <person name="Verdin E."/>
            <person name="Gibson B.W."/>
        </authorList>
    </citation>
    <scope>ACETYLATION [LARGE SCALE ANALYSIS] AT LYS-230 AND LYS-239</scope>
    <scope>IDENTIFICATION BY MASS SPECTROMETRY [LARGE SCALE ANALYSIS]</scope>
    <source>
        <tissue>Liver</tissue>
    </source>
</reference>
<sequence length="390" mass="42880">MAAVAARAGGLLWLRAAGAERRRCGLRCAALVQGFLQPGGEDTAQKRRVAHFTFHPDPESLQYGQTQKMNLFQSITSALDNSLAKDPTAVIFGEDVAFGGVFRCTVGLRDKYGKDRVFNTPLCEQGIVGFGIGIAVTGATAIAEIQFADYIFPAFDQIVNEAAKYRYRSGDLFNCGSLTIRAPWGCVGHGALYHSQSPEAFFAHCPGIKVVIPRSPFQAKGLLLSCIEDKNPCIFFEPKILYRAAVEQVPVEPYKIPLSQAEVIQEGSDVTLVAWGTQVHVIREVASMAQEKLGVSCEVIDLRTIVPWDVDTVCKSVIKTGRLLISHEAPLTGGFASEISSTVQEECFLNLEAPISRVCGYDTPFPHIFEPFYIPDKWKCYDALRKMINY</sequence>
<organism>
    <name type="scientific">Mus musculus</name>
    <name type="common">Mouse</name>
    <dbReference type="NCBI Taxonomy" id="10090"/>
    <lineage>
        <taxon>Eukaryota</taxon>
        <taxon>Metazoa</taxon>
        <taxon>Chordata</taxon>
        <taxon>Craniata</taxon>
        <taxon>Vertebrata</taxon>
        <taxon>Euteleostomi</taxon>
        <taxon>Mammalia</taxon>
        <taxon>Eutheria</taxon>
        <taxon>Euarchontoglires</taxon>
        <taxon>Glires</taxon>
        <taxon>Rodentia</taxon>
        <taxon>Myomorpha</taxon>
        <taxon>Muroidea</taxon>
        <taxon>Muridae</taxon>
        <taxon>Murinae</taxon>
        <taxon>Mus</taxon>
        <taxon>Mus</taxon>
    </lineage>
</organism>
<evidence type="ECO:0000250" key="1">
    <source>
        <dbReference type="UniProtKB" id="P21953"/>
    </source>
</evidence>
<evidence type="ECO:0000255" key="2"/>
<evidence type="ECO:0000303" key="3">
    <source>
    </source>
</evidence>
<evidence type="ECO:0000312" key="4">
    <source>
        <dbReference type="MGI" id="MGI:88137"/>
    </source>
</evidence>
<evidence type="ECO:0007744" key="5">
    <source>
    </source>
</evidence>
<dbReference type="EC" id="1.2.4.4" evidence="1"/>
<dbReference type="EMBL" id="L16992">
    <property type="status" value="NOT_ANNOTATED_CDS"/>
    <property type="molecule type" value="mRNA"/>
</dbReference>
<dbReference type="EMBL" id="BC064099">
    <property type="protein sequence ID" value="AAH64099.1"/>
    <property type="molecule type" value="mRNA"/>
</dbReference>
<dbReference type="CCDS" id="CCDS23378.1">
    <molecule id="Q6P3A8-2"/>
</dbReference>
<dbReference type="CCDS" id="CCDS81045.1">
    <molecule id="Q6P3A8-1"/>
</dbReference>
<dbReference type="RefSeq" id="NP_001292864.1">
    <molecule id="Q6P3A8-1"/>
    <property type="nucleotide sequence ID" value="NM_001305935.1"/>
</dbReference>
<dbReference type="RefSeq" id="NP_954665.1">
    <molecule id="Q6P3A8-2"/>
    <property type="nucleotide sequence ID" value="NM_199195.1"/>
</dbReference>
<dbReference type="SMR" id="Q6P3A8"/>
<dbReference type="BioGRID" id="198315">
    <property type="interactions" value="3"/>
</dbReference>
<dbReference type="FunCoup" id="Q6P3A8">
    <property type="interactions" value="1575"/>
</dbReference>
<dbReference type="IntAct" id="Q6P3A8">
    <property type="interactions" value="1"/>
</dbReference>
<dbReference type="MINT" id="Q6P3A8"/>
<dbReference type="STRING" id="10090.ENSMUSP00000139684"/>
<dbReference type="GlyGen" id="Q6P3A8">
    <property type="glycosylation" value="1 site, 1 O-linked glycan (1 site)"/>
</dbReference>
<dbReference type="iPTMnet" id="Q6P3A8"/>
<dbReference type="PhosphoSitePlus" id="Q6P3A8"/>
<dbReference type="SwissPalm" id="Q6P3A8"/>
<dbReference type="jPOST" id="Q6P3A8"/>
<dbReference type="PaxDb" id="10090-ENSMUSP00000139684"/>
<dbReference type="PeptideAtlas" id="Q6P3A8"/>
<dbReference type="ProteomicsDB" id="293920">
    <molecule id="Q6P3A8-1"/>
</dbReference>
<dbReference type="ProteomicsDB" id="293921">
    <molecule id="Q6P3A8-2"/>
</dbReference>
<dbReference type="Pumba" id="Q6P3A8"/>
<dbReference type="Antibodypedia" id="49986">
    <property type="antibodies" value="104 antibodies from 22 providers"/>
</dbReference>
<dbReference type="DNASU" id="12040"/>
<dbReference type="Ensembl" id="ENSMUST00000034801.11">
    <molecule id="Q6P3A8-2"/>
    <property type="protein sequence ID" value="ENSMUSP00000034801.5"/>
    <property type="gene ID" value="ENSMUSG00000032263.15"/>
</dbReference>
<dbReference type="Ensembl" id="ENSMUST00000190166.7">
    <molecule id="Q6P3A8-2"/>
    <property type="protein sequence ID" value="ENSMUSP00000140598.2"/>
    <property type="gene ID" value="ENSMUSG00000032263.15"/>
</dbReference>
<dbReference type="Ensembl" id="ENSMUST00000190637.7">
    <molecule id="Q6P3A8-1"/>
    <property type="protein sequence ID" value="ENSMUSP00000139684.2"/>
    <property type="gene ID" value="ENSMUSG00000032263.15"/>
</dbReference>
<dbReference type="GeneID" id="12040"/>
<dbReference type="KEGG" id="mmu:12040"/>
<dbReference type="UCSC" id="uc009qwr.1">
    <molecule id="Q6P3A8-1"/>
    <property type="organism name" value="mouse"/>
</dbReference>
<dbReference type="AGR" id="MGI:88137"/>
<dbReference type="CTD" id="594"/>
<dbReference type="MGI" id="MGI:88137">
    <property type="gene designation" value="Bckdhb"/>
</dbReference>
<dbReference type="VEuPathDB" id="HostDB:ENSMUSG00000032263"/>
<dbReference type="eggNOG" id="KOG0525">
    <property type="taxonomic scope" value="Eukaryota"/>
</dbReference>
<dbReference type="GeneTree" id="ENSGT00940000156533"/>
<dbReference type="HOGENOM" id="CLU_012907_1_0_1"/>
<dbReference type="InParanoid" id="Q6P3A8"/>
<dbReference type="OMA" id="SEAYYMA"/>
<dbReference type="OrthoDB" id="878at2759"/>
<dbReference type="PhylomeDB" id="Q6P3A8"/>
<dbReference type="TreeFam" id="TF105947"/>
<dbReference type="Reactome" id="R-MMU-70895">
    <property type="pathway name" value="Branched-chain amino acid catabolism"/>
</dbReference>
<dbReference type="Reactome" id="R-MMU-9859138">
    <property type="pathway name" value="BCKDH synthesizes BCAA-CoA from KIC, KMVA, KIV"/>
</dbReference>
<dbReference type="BioGRID-ORCS" id="12040">
    <property type="hits" value="1 hit in 62 CRISPR screens"/>
</dbReference>
<dbReference type="ChiTaRS" id="Bckdhb">
    <property type="organism name" value="mouse"/>
</dbReference>
<dbReference type="PRO" id="PR:Q6P3A8"/>
<dbReference type="Proteomes" id="UP000000589">
    <property type="component" value="Chromosome 9"/>
</dbReference>
<dbReference type="RNAct" id="Q6P3A8">
    <property type="molecule type" value="protein"/>
</dbReference>
<dbReference type="Bgee" id="ENSMUSG00000032263">
    <property type="expression patterns" value="Expressed in left lobe of liver and 271 other cell types or tissues"/>
</dbReference>
<dbReference type="GO" id="GO:0160157">
    <property type="term" value="C:branched-chain alpha-ketoacid dehydrogenase complex"/>
    <property type="evidence" value="ECO:0000250"/>
    <property type="project" value="UniProtKB"/>
</dbReference>
<dbReference type="GO" id="GO:0005743">
    <property type="term" value="C:mitochondrial inner membrane"/>
    <property type="evidence" value="ECO:0000304"/>
    <property type="project" value="MGI"/>
</dbReference>
<dbReference type="GO" id="GO:0005759">
    <property type="term" value="C:mitochondrial matrix"/>
    <property type="evidence" value="ECO:0007669"/>
    <property type="project" value="UniProtKB-SubCell"/>
</dbReference>
<dbReference type="GO" id="GO:0005739">
    <property type="term" value="C:mitochondrion"/>
    <property type="evidence" value="ECO:0007005"/>
    <property type="project" value="MGI"/>
</dbReference>
<dbReference type="GO" id="GO:0005730">
    <property type="term" value="C:nucleolus"/>
    <property type="evidence" value="ECO:0007669"/>
    <property type="project" value="Ensembl"/>
</dbReference>
<dbReference type="GO" id="GO:0005654">
    <property type="term" value="C:nucleoplasm"/>
    <property type="evidence" value="ECO:0007669"/>
    <property type="project" value="Ensembl"/>
</dbReference>
<dbReference type="GO" id="GO:0003863">
    <property type="term" value="F:3-methyl-2-oxobutanoate dehydrogenase (2-methylpropanoyl-transferring) activity"/>
    <property type="evidence" value="ECO:0000314"/>
    <property type="project" value="MGI"/>
</dbReference>
<dbReference type="GO" id="GO:0047101">
    <property type="term" value="F:branched-chain alpha-keto acid dehydrogenase activity"/>
    <property type="evidence" value="ECO:0007669"/>
    <property type="project" value="Ensembl"/>
</dbReference>
<dbReference type="GO" id="GO:0046872">
    <property type="term" value="F:metal ion binding"/>
    <property type="evidence" value="ECO:0007669"/>
    <property type="project" value="UniProtKB-KW"/>
</dbReference>
<dbReference type="GO" id="GO:0009063">
    <property type="term" value="P:amino acid catabolic process"/>
    <property type="evidence" value="ECO:0000304"/>
    <property type="project" value="MGI"/>
</dbReference>
<dbReference type="GO" id="GO:0009083">
    <property type="term" value="P:branched-chain amino acid catabolic process"/>
    <property type="evidence" value="ECO:0000250"/>
    <property type="project" value="UniProtKB"/>
</dbReference>
<dbReference type="GO" id="GO:0006629">
    <property type="term" value="P:lipid metabolic process"/>
    <property type="evidence" value="ECO:0007669"/>
    <property type="project" value="UniProtKB-KW"/>
</dbReference>
<dbReference type="CDD" id="cd07036">
    <property type="entry name" value="TPP_PYR_E1-PDHc-beta_like"/>
    <property type="match status" value="1"/>
</dbReference>
<dbReference type="FunFam" id="3.40.50.920:FF:000004">
    <property type="entry name" value="2-oxoisovalerate dehydrogenase subunit beta 1, mitochondrial"/>
    <property type="match status" value="1"/>
</dbReference>
<dbReference type="FunFam" id="3.40.50.970:FF:000001">
    <property type="entry name" value="Pyruvate dehydrogenase E1 beta subunit"/>
    <property type="match status" value="1"/>
</dbReference>
<dbReference type="Gene3D" id="3.40.50.920">
    <property type="match status" value="1"/>
</dbReference>
<dbReference type="Gene3D" id="3.40.50.970">
    <property type="match status" value="1"/>
</dbReference>
<dbReference type="InterPro" id="IPR029061">
    <property type="entry name" value="THDP-binding"/>
</dbReference>
<dbReference type="InterPro" id="IPR009014">
    <property type="entry name" value="Transketo_C/PFOR_II"/>
</dbReference>
<dbReference type="InterPro" id="IPR005475">
    <property type="entry name" value="Transketolase-like_Pyr-bd"/>
</dbReference>
<dbReference type="InterPro" id="IPR033248">
    <property type="entry name" value="Transketolase_C"/>
</dbReference>
<dbReference type="PANTHER" id="PTHR42980:SF1">
    <property type="entry name" value="2-OXOISOVALERATE DEHYDROGENASE SUBUNIT BETA, MITOCHONDRIAL"/>
    <property type="match status" value="1"/>
</dbReference>
<dbReference type="PANTHER" id="PTHR42980">
    <property type="entry name" value="2-OXOISOVALERATE DEHYDROGENASE SUBUNIT BETA-RELATED"/>
    <property type="match status" value="1"/>
</dbReference>
<dbReference type="Pfam" id="PF02779">
    <property type="entry name" value="Transket_pyr"/>
    <property type="match status" value="1"/>
</dbReference>
<dbReference type="Pfam" id="PF02780">
    <property type="entry name" value="Transketolase_C"/>
    <property type="match status" value="1"/>
</dbReference>
<dbReference type="SMART" id="SM00861">
    <property type="entry name" value="Transket_pyr"/>
    <property type="match status" value="1"/>
</dbReference>
<dbReference type="SUPFAM" id="SSF52518">
    <property type="entry name" value="Thiamin diphosphate-binding fold (THDP-binding)"/>
    <property type="match status" value="1"/>
</dbReference>
<dbReference type="SUPFAM" id="SSF52922">
    <property type="entry name" value="TK C-terminal domain-like"/>
    <property type="match status" value="1"/>
</dbReference>
<comment type="function">
    <text evidence="1">Together with BCKDHA forms the heterotetrameric E1 subunit of the mitochondrial branched-chain alpha-ketoacid dehydrogenase (BCKD) complex. The BCKD complex catalyzes the multi-step oxidative decarboxylation of alpha-ketoacids derived from the branched-chain amino-acids valine, leucine and isoleucine producing CO2 and acyl-CoA which is subsequently utilized to produce energy. The E1 subunit catalyzes the first step with the decarboxylation of the alpha-ketoacid forming an enzyme-product intermediate. A reductive acylation mediated by the lipoylamide cofactor of E2 extracts the acyl group from the E1 active site for the next step of the reaction.</text>
</comment>
<comment type="catalytic activity">
    <reaction evidence="1">
        <text>N(6)-[(R)-lipoyl]-L-lysyl-[protein] + 3-methyl-2-oxobutanoate + H(+) = N(6)-[(R)-S(8)-2-methylpropanoyldihydrolipoyl]-L-lysyl-[protein] + CO2</text>
        <dbReference type="Rhea" id="RHEA:13457"/>
        <dbReference type="Rhea" id="RHEA-COMP:10474"/>
        <dbReference type="Rhea" id="RHEA-COMP:10497"/>
        <dbReference type="ChEBI" id="CHEBI:11851"/>
        <dbReference type="ChEBI" id="CHEBI:15378"/>
        <dbReference type="ChEBI" id="CHEBI:16526"/>
        <dbReference type="ChEBI" id="CHEBI:83099"/>
        <dbReference type="ChEBI" id="CHEBI:83142"/>
        <dbReference type="EC" id="1.2.4.4"/>
    </reaction>
    <physiologicalReaction direction="left-to-right" evidence="1">
        <dbReference type="Rhea" id="RHEA:13458"/>
    </physiologicalReaction>
</comment>
<comment type="cofactor">
    <cofactor evidence="1">
        <name>thiamine diphosphate</name>
        <dbReference type="ChEBI" id="CHEBI:58937"/>
    </cofactor>
</comment>
<comment type="subunit">
    <text evidence="1">Heterotetramer of 2 alpha/BCKDHA and 2 beta chains/BCKDHB that forms the branched-chain alpha-keto acid decarboxylase (E1) component of the BCKD complex. The branched-chain alpha-ketoacid dehydrogenase is a large complex composed of three major building blocks E1, E2 and E3. It is organized around E2, a 24-meric cubic core composed of DBT, to which are associated 6 to 12 copies of E1, and approximately 6 copies of the dehydrogenase E3, a DLD dimer.</text>
</comment>
<comment type="subcellular location">
    <subcellularLocation>
        <location evidence="1">Mitochondrion matrix</location>
    </subcellularLocation>
</comment>
<comment type="alternative products">
    <event type="alternative splicing"/>
    <isoform>
        <id>Q6P3A8-1</id>
        <name>1</name>
        <sequence type="displayed"/>
    </isoform>
    <isoform>
        <id>Q6P3A8-2</id>
        <name>2</name>
        <sequence type="described" ref="VSP_029841"/>
    </isoform>
</comment>